<name>RSMG_BURP6</name>
<proteinExistence type="inferred from homology"/>
<protein>
    <recommendedName>
        <fullName evidence="1">Ribosomal RNA small subunit methyltransferase G</fullName>
        <ecNumber evidence="1">2.1.1.170</ecNumber>
    </recommendedName>
    <alternativeName>
        <fullName evidence="1">16S rRNA 7-methylguanosine methyltransferase</fullName>
        <shortName evidence="1">16S rRNA m7G methyltransferase</shortName>
    </alternativeName>
</protein>
<dbReference type="EC" id="2.1.1.170" evidence="1"/>
<dbReference type="EMBL" id="CP000570">
    <property type="protein sequence ID" value="ABN85287.1"/>
    <property type="status" value="ALT_INIT"/>
    <property type="molecule type" value="Genomic_DNA"/>
</dbReference>
<dbReference type="RefSeq" id="WP_079997128.1">
    <property type="nucleotide sequence ID" value="NC_009074.1"/>
</dbReference>
<dbReference type="SMR" id="A3NF53"/>
<dbReference type="KEGG" id="bpd:BURPS668_3981"/>
<dbReference type="HOGENOM" id="CLU_065341_2_0_4"/>
<dbReference type="GO" id="GO:0005829">
    <property type="term" value="C:cytosol"/>
    <property type="evidence" value="ECO:0007669"/>
    <property type="project" value="TreeGrafter"/>
</dbReference>
<dbReference type="GO" id="GO:0070043">
    <property type="term" value="F:rRNA (guanine-N7-)-methyltransferase activity"/>
    <property type="evidence" value="ECO:0007669"/>
    <property type="project" value="UniProtKB-UniRule"/>
</dbReference>
<dbReference type="CDD" id="cd02440">
    <property type="entry name" value="AdoMet_MTases"/>
    <property type="match status" value="1"/>
</dbReference>
<dbReference type="Gene3D" id="3.40.50.150">
    <property type="entry name" value="Vaccinia Virus protein VP39"/>
    <property type="match status" value="1"/>
</dbReference>
<dbReference type="HAMAP" id="MF_00074">
    <property type="entry name" value="16SrRNA_methyltr_G"/>
    <property type="match status" value="1"/>
</dbReference>
<dbReference type="InterPro" id="IPR003682">
    <property type="entry name" value="rRNA_ssu_MeTfrase_G"/>
</dbReference>
<dbReference type="InterPro" id="IPR029063">
    <property type="entry name" value="SAM-dependent_MTases_sf"/>
</dbReference>
<dbReference type="NCBIfam" id="TIGR00138">
    <property type="entry name" value="rsmG_gidB"/>
    <property type="match status" value="1"/>
</dbReference>
<dbReference type="PANTHER" id="PTHR31760">
    <property type="entry name" value="S-ADENOSYL-L-METHIONINE-DEPENDENT METHYLTRANSFERASES SUPERFAMILY PROTEIN"/>
    <property type="match status" value="1"/>
</dbReference>
<dbReference type="PANTHER" id="PTHR31760:SF0">
    <property type="entry name" value="S-ADENOSYL-L-METHIONINE-DEPENDENT METHYLTRANSFERASES SUPERFAMILY PROTEIN"/>
    <property type="match status" value="1"/>
</dbReference>
<dbReference type="Pfam" id="PF02527">
    <property type="entry name" value="GidB"/>
    <property type="match status" value="1"/>
</dbReference>
<dbReference type="PIRSF" id="PIRSF003078">
    <property type="entry name" value="GidB"/>
    <property type="match status" value="1"/>
</dbReference>
<dbReference type="SUPFAM" id="SSF53335">
    <property type="entry name" value="S-adenosyl-L-methionine-dependent methyltransferases"/>
    <property type="match status" value="1"/>
</dbReference>
<feature type="chain" id="PRO_0000335325" description="Ribosomal RNA small subunit methyltransferase G">
    <location>
        <begin position="1"/>
        <end position="232"/>
    </location>
</feature>
<feature type="binding site" evidence="1">
    <location>
        <position position="93"/>
    </location>
    <ligand>
        <name>S-adenosyl-L-methionine</name>
        <dbReference type="ChEBI" id="CHEBI:59789"/>
    </ligand>
</feature>
<feature type="binding site" evidence="1">
    <location>
        <position position="98"/>
    </location>
    <ligand>
        <name>S-adenosyl-L-methionine</name>
        <dbReference type="ChEBI" id="CHEBI:59789"/>
    </ligand>
</feature>
<feature type="binding site" evidence="1">
    <location>
        <begin position="144"/>
        <end position="145"/>
    </location>
    <ligand>
        <name>S-adenosyl-L-methionine</name>
        <dbReference type="ChEBI" id="CHEBI:59789"/>
    </ligand>
</feature>
<feature type="binding site" evidence="1">
    <location>
        <position position="163"/>
    </location>
    <ligand>
        <name>S-adenosyl-L-methionine</name>
        <dbReference type="ChEBI" id="CHEBI:59789"/>
    </ligand>
</feature>
<gene>
    <name evidence="1" type="primary">rsmG</name>
    <name type="ordered locus">BURPS668_3981</name>
</gene>
<reference key="1">
    <citation type="journal article" date="2010" name="Genome Biol. Evol.">
        <title>Continuing evolution of Burkholderia mallei through genome reduction and large-scale rearrangements.</title>
        <authorList>
            <person name="Losada L."/>
            <person name="Ronning C.M."/>
            <person name="DeShazer D."/>
            <person name="Woods D."/>
            <person name="Fedorova N."/>
            <person name="Kim H.S."/>
            <person name="Shabalina S.A."/>
            <person name="Pearson T.R."/>
            <person name="Brinkac L."/>
            <person name="Tan P."/>
            <person name="Nandi T."/>
            <person name="Crabtree J."/>
            <person name="Badger J."/>
            <person name="Beckstrom-Sternberg S."/>
            <person name="Saqib M."/>
            <person name="Schutzer S.E."/>
            <person name="Keim P."/>
            <person name="Nierman W.C."/>
        </authorList>
    </citation>
    <scope>NUCLEOTIDE SEQUENCE [LARGE SCALE GENOMIC DNA]</scope>
    <source>
        <strain>668</strain>
    </source>
</reference>
<sequence length="232" mass="24749">MTVQQRRRLPIASRETLQALLSEGAQALGVALSDAQRGALLDYVALLAKWNAVYNLTAIRDPRQMLIQHILDSLSIVPHLGAHGAAAAALDVGSGGGLPGVVLAIALPGWRVTLNDIVHKKSAFQNQAKAELKLGNLSVVTGRVETLRSGADVPAKFDVIVSRAFADLADFVTLARHLVAPGGSIWAMKGVRPDEEIGRLPDGACVKQMIRLTVPSLDAERHLIEVELDEAI</sequence>
<evidence type="ECO:0000255" key="1">
    <source>
        <dbReference type="HAMAP-Rule" id="MF_00074"/>
    </source>
</evidence>
<evidence type="ECO:0000305" key="2"/>
<keyword id="KW-0963">Cytoplasm</keyword>
<keyword id="KW-0489">Methyltransferase</keyword>
<keyword id="KW-0698">rRNA processing</keyword>
<keyword id="KW-0949">S-adenosyl-L-methionine</keyword>
<keyword id="KW-0808">Transferase</keyword>
<comment type="function">
    <text evidence="1">Specifically methylates the N7 position of guanine in position 527 of 16S rRNA.</text>
</comment>
<comment type="catalytic activity">
    <reaction evidence="1">
        <text>guanosine(527) in 16S rRNA + S-adenosyl-L-methionine = N(7)-methylguanosine(527) in 16S rRNA + S-adenosyl-L-homocysteine</text>
        <dbReference type="Rhea" id="RHEA:42732"/>
        <dbReference type="Rhea" id="RHEA-COMP:10209"/>
        <dbReference type="Rhea" id="RHEA-COMP:10210"/>
        <dbReference type="ChEBI" id="CHEBI:57856"/>
        <dbReference type="ChEBI" id="CHEBI:59789"/>
        <dbReference type="ChEBI" id="CHEBI:74269"/>
        <dbReference type="ChEBI" id="CHEBI:74480"/>
        <dbReference type="EC" id="2.1.1.170"/>
    </reaction>
</comment>
<comment type="subcellular location">
    <subcellularLocation>
        <location evidence="1">Cytoplasm</location>
    </subcellularLocation>
</comment>
<comment type="similarity">
    <text evidence="1">Belongs to the methyltransferase superfamily. RNA methyltransferase RsmG family.</text>
</comment>
<comment type="sequence caution" evidence="2">
    <conflict type="erroneous initiation">
        <sequence resource="EMBL-CDS" id="ABN85287"/>
    </conflict>
</comment>
<accession>A3NF53</accession>
<organism>
    <name type="scientific">Burkholderia pseudomallei (strain 668)</name>
    <dbReference type="NCBI Taxonomy" id="320373"/>
    <lineage>
        <taxon>Bacteria</taxon>
        <taxon>Pseudomonadati</taxon>
        <taxon>Pseudomonadota</taxon>
        <taxon>Betaproteobacteria</taxon>
        <taxon>Burkholderiales</taxon>
        <taxon>Burkholderiaceae</taxon>
        <taxon>Burkholderia</taxon>
        <taxon>pseudomallei group</taxon>
    </lineage>
</organism>